<evidence type="ECO:0000255" key="1">
    <source>
        <dbReference type="HAMAP-Rule" id="MF_01019"/>
    </source>
</evidence>
<dbReference type="EC" id="3.5.4.19" evidence="1"/>
<dbReference type="EC" id="3.6.1.31" evidence="1"/>
<dbReference type="EMBL" id="BA000039">
    <property type="protein sequence ID" value="BAC07786.1"/>
    <property type="molecule type" value="Genomic_DNA"/>
</dbReference>
<dbReference type="RefSeq" id="NP_681024.1">
    <property type="nucleotide sequence ID" value="NC_004113.1"/>
</dbReference>
<dbReference type="RefSeq" id="WP_011056088.1">
    <property type="nucleotide sequence ID" value="NC_004113.1"/>
</dbReference>
<dbReference type="SMR" id="Q8DM88"/>
<dbReference type="STRING" id="197221.gene:10746815"/>
<dbReference type="EnsemblBacteria" id="BAC07786">
    <property type="protein sequence ID" value="BAC07786"/>
    <property type="gene ID" value="BAC07786"/>
</dbReference>
<dbReference type="KEGG" id="tel:tll0233"/>
<dbReference type="PATRIC" id="fig|197221.4.peg.238"/>
<dbReference type="eggNOG" id="COG0139">
    <property type="taxonomic scope" value="Bacteria"/>
</dbReference>
<dbReference type="eggNOG" id="COG0140">
    <property type="taxonomic scope" value="Bacteria"/>
</dbReference>
<dbReference type="UniPathway" id="UPA00031">
    <property type="reaction ID" value="UER00007"/>
</dbReference>
<dbReference type="UniPathway" id="UPA00031">
    <property type="reaction ID" value="UER00008"/>
</dbReference>
<dbReference type="Proteomes" id="UP000000440">
    <property type="component" value="Chromosome"/>
</dbReference>
<dbReference type="GO" id="GO:0005737">
    <property type="term" value="C:cytoplasm"/>
    <property type="evidence" value="ECO:0007669"/>
    <property type="project" value="UniProtKB-SubCell"/>
</dbReference>
<dbReference type="GO" id="GO:0005524">
    <property type="term" value="F:ATP binding"/>
    <property type="evidence" value="ECO:0007669"/>
    <property type="project" value="UniProtKB-KW"/>
</dbReference>
<dbReference type="GO" id="GO:0004635">
    <property type="term" value="F:phosphoribosyl-AMP cyclohydrolase activity"/>
    <property type="evidence" value="ECO:0007669"/>
    <property type="project" value="UniProtKB-UniRule"/>
</dbReference>
<dbReference type="GO" id="GO:0004636">
    <property type="term" value="F:phosphoribosyl-ATP diphosphatase activity"/>
    <property type="evidence" value="ECO:0007669"/>
    <property type="project" value="UniProtKB-UniRule"/>
</dbReference>
<dbReference type="GO" id="GO:0000105">
    <property type="term" value="P:L-histidine biosynthetic process"/>
    <property type="evidence" value="ECO:0007669"/>
    <property type="project" value="UniProtKB-UniRule"/>
</dbReference>
<dbReference type="CDD" id="cd11534">
    <property type="entry name" value="NTP-PPase_HisIE_like"/>
    <property type="match status" value="1"/>
</dbReference>
<dbReference type="FunFam" id="3.10.20.810:FF:000001">
    <property type="entry name" value="Histidine biosynthesis bifunctional protein HisIE"/>
    <property type="match status" value="1"/>
</dbReference>
<dbReference type="Gene3D" id="1.10.287.1080">
    <property type="entry name" value="MazG-like"/>
    <property type="match status" value="1"/>
</dbReference>
<dbReference type="Gene3D" id="3.10.20.810">
    <property type="entry name" value="Phosphoribosyl-AMP cyclohydrolase"/>
    <property type="match status" value="1"/>
</dbReference>
<dbReference type="HAMAP" id="MF_01020">
    <property type="entry name" value="HisE"/>
    <property type="match status" value="1"/>
</dbReference>
<dbReference type="HAMAP" id="MF_01021">
    <property type="entry name" value="HisI"/>
    <property type="match status" value="1"/>
</dbReference>
<dbReference type="HAMAP" id="MF_01019">
    <property type="entry name" value="HisIE"/>
    <property type="match status" value="1"/>
</dbReference>
<dbReference type="InterPro" id="IPR023019">
    <property type="entry name" value="His_synth_HisIE"/>
</dbReference>
<dbReference type="InterPro" id="IPR008179">
    <property type="entry name" value="HisE"/>
</dbReference>
<dbReference type="InterPro" id="IPR026660">
    <property type="entry name" value="PRA-CH"/>
</dbReference>
<dbReference type="InterPro" id="IPR021130">
    <property type="entry name" value="PRib-ATP_PPHydrolase-like"/>
</dbReference>
<dbReference type="InterPro" id="IPR002496">
    <property type="entry name" value="PRib_AMP_CycHydrolase_dom"/>
</dbReference>
<dbReference type="InterPro" id="IPR038019">
    <property type="entry name" value="PRib_AMP_CycHydrolase_sf"/>
</dbReference>
<dbReference type="NCBIfam" id="TIGR03188">
    <property type="entry name" value="histidine_hisI"/>
    <property type="match status" value="1"/>
</dbReference>
<dbReference type="NCBIfam" id="NF000768">
    <property type="entry name" value="PRK00051.1"/>
    <property type="match status" value="1"/>
</dbReference>
<dbReference type="NCBIfam" id="NF002747">
    <property type="entry name" value="PRK02759.1"/>
    <property type="match status" value="1"/>
</dbReference>
<dbReference type="PANTHER" id="PTHR42945">
    <property type="entry name" value="HISTIDINE BIOSYNTHESIS BIFUNCTIONAL PROTEIN"/>
    <property type="match status" value="1"/>
</dbReference>
<dbReference type="PANTHER" id="PTHR42945:SF1">
    <property type="entry name" value="HISTIDINE BIOSYNTHESIS BIFUNCTIONAL PROTEIN HIS7"/>
    <property type="match status" value="1"/>
</dbReference>
<dbReference type="Pfam" id="PF01502">
    <property type="entry name" value="PRA-CH"/>
    <property type="match status" value="1"/>
</dbReference>
<dbReference type="Pfam" id="PF01503">
    <property type="entry name" value="PRA-PH"/>
    <property type="match status" value="1"/>
</dbReference>
<dbReference type="SUPFAM" id="SSF101386">
    <property type="entry name" value="all-alpha NTP pyrophosphatases"/>
    <property type="match status" value="1"/>
</dbReference>
<dbReference type="SUPFAM" id="SSF141734">
    <property type="entry name" value="HisI-like"/>
    <property type="match status" value="1"/>
</dbReference>
<feature type="chain" id="PRO_0000136438" description="Histidine biosynthesis bifunctional protein HisIE">
    <location>
        <begin position="1"/>
        <end position="214"/>
    </location>
</feature>
<feature type="region of interest" description="Phosphoribosyl-AMP cyclohydrolase">
    <location>
        <begin position="1"/>
        <end position="125"/>
    </location>
</feature>
<feature type="region of interest" description="Phosphoribosyl-ATP pyrophosphohydrolase">
    <location>
        <begin position="126"/>
        <end position="214"/>
    </location>
</feature>
<proteinExistence type="inferred from homology"/>
<comment type="catalytic activity">
    <reaction evidence="1">
        <text>1-(5-phospho-beta-D-ribosyl)-ATP + H2O = 1-(5-phospho-beta-D-ribosyl)-5'-AMP + diphosphate + H(+)</text>
        <dbReference type="Rhea" id="RHEA:22828"/>
        <dbReference type="ChEBI" id="CHEBI:15377"/>
        <dbReference type="ChEBI" id="CHEBI:15378"/>
        <dbReference type="ChEBI" id="CHEBI:33019"/>
        <dbReference type="ChEBI" id="CHEBI:59457"/>
        <dbReference type="ChEBI" id="CHEBI:73183"/>
        <dbReference type="EC" id="3.6.1.31"/>
    </reaction>
</comment>
<comment type="catalytic activity">
    <reaction evidence="1">
        <text>1-(5-phospho-beta-D-ribosyl)-5'-AMP + H2O = 1-(5-phospho-beta-D-ribosyl)-5-[(5-phospho-beta-D-ribosylamino)methylideneamino]imidazole-4-carboxamide</text>
        <dbReference type="Rhea" id="RHEA:20049"/>
        <dbReference type="ChEBI" id="CHEBI:15377"/>
        <dbReference type="ChEBI" id="CHEBI:58435"/>
        <dbReference type="ChEBI" id="CHEBI:59457"/>
        <dbReference type="EC" id="3.5.4.19"/>
    </reaction>
</comment>
<comment type="pathway">
    <text evidence="1">Amino-acid biosynthesis; L-histidine biosynthesis; L-histidine from 5-phospho-alpha-D-ribose 1-diphosphate: step 2/9.</text>
</comment>
<comment type="pathway">
    <text evidence="1">Amino-acid biosynthesis; L-histidine biosynthesis; L-histidine from 5-phospho-alpha-D-ribose 1-diphosphate: step 3/9.</text>
</comment>
<comment type="subcellular location">
    <subcellularLocation>
        <location evidence="1">Cytoplasm</location>
    </subcellularLocation>
</comment>
<comment type="similarity">
    <text evidence="1">In the N-terminal section; belongs to the PRA-CH family.</text>
</comment>
<comment type="similarity">
    <text evidence="1">In the C-terminal section; belongs to the PRA-PH family.</text>
</comment>
<keyword id="KW-0028">Amino-acid biosynthesis</keyword>
<keyword id="KW-0067">ATP-binding</keyword>
<keyword id="KW-0963">Cytoplasm</keyword>
<keyword id="KW-0368">Histidine biosynthesis</keyword>
<keyword id="KW-0378">Hydrolase</keyword>
<keyword id="KW-0511">Multifunctional enzyme</keyword>
<keyword id="KW-0547">Nucleotide-binding</keyword>
<keyword id="KW-1185">Reference proteome</keyword>
<reference key="1">
    <citation type="journal article" date="2002" name="DNA Res.">
        <title>Complete genome structure of the thermophilic cyanobacterium Thermosynechococcus elongatus BP-1.</title>
        <authorList>
            <person name="Nakamura Y."/>
            <person name="Kaneko T."/>
            <person name="Sato S."/>
            <person name="Ikeuchi M."/>
            <person name="Katoh H."/>
            <person name="Sasamoto S."/>
            <person name="Watanabe A."/>
            <person name="Iriguchi M."/>
            <person name="Kawashima K."/>
            <person name="Kimura T."/>
            <person name="Kishida Y."/>
            <person name="Kiyokawa C."/>
            <person name="Kohara M."/>
            <person name="Matsumoto M."/>
            <person name="Matsuno A."/>
            <person name="Nakazaki N."/>
            <person name="Shimpo S."/>
            <person name="Sugimoto M."/>
            <person name="Takeuchi C."/>
            <person name="Yamada M."/>
            <person name="Tabata S."/>
        </authorList>
    </citation>
    <scope>NUCLEOTIDE SEQUENCE [LARGE SCALE GENOMIC DNA]</scope>
    <source>
        <strain>NIES-2133 / IAM M-273 / BP-1</strain>
    </source>
</reference>
<gene>
    <name evidence="1" type="primary">hisI</name>
    <name evidence="1" type="synonym">hisIE</name>
    <name type="ordered locus">tll0233</name>
</gene>
<name>HIS2_THEVB</name>
<organism>
    <name type="scientific">Thermosynechococcus vestitus (strain NIES-2133 / IAM M-273 / BP-1)</name>
    <dbReference type="NCBI Taxonomy" id="197221"/>
    <lineage>
        <taxon>Bacteria</taxon>
        <taxon>Bacillati</taxon>
        <taxon>Cyanobacteriota</taxon>
        <taxon>Cyanophyceae</taxon>
        <taxon>Acaryochloridales</taxon>
        <taxon>Thermosynechococcaceae</taxon>
        <taxon>Thermosynechococcus</taxon>
    </lineage>
</organism>
<accession>Q8DM88</accession>
<sequence length="214" mass="24440">MPATALSLPLDEIRYDERGLVPAIVQDYLDGTVLMLAWMNRESLQKTLETGRTWFWSRSRQELWPKGETSGHVQWVKSIRYDCDSDALLLTVEQVGHIACHTGERSCFHRHGAKGESIEPPPADTLSQVYNIVCQRRDFPQLQSYTSSLFTAGDNKILKKLGEETAEVVMACKDDDPEAIASEVADLFYHTLVALAYHRVSLRQVYEQLQLRRR</sequence>
<protein>
    <recommendedName>
        <fullName evidence="1">Histidine biosynthesis bifunctional protein HisIE</fullName>
    </recommendedName>
    <domain>
        <recommendedName>
            <fullName evidence="1">Phosphoribosyl-AMP cyclohydrolase</fullName>
            <shortName evidence="1">PRA-CH</shortName>
            <ecNumber evidence="1">3.5.4.19</ecNumber>
        </recommendedName>
    </domain>
    <domain>
        <recommendedName>
            <fullName evidence="1">Phosphoribosyl-ATP pyrophosphatase</fullName>
            <shortName evidence="1">PRA-PH</shortName>
            <ecNumber evidence="1">3.6.1.31</ecNumber>
        </recommendedName>
    </domain>
</protein>